<protein>
    <recommendedName>
        <fullName>Putative uncharacterized protein DDB_G0283135</fullName>
    </recommendedName>
</protein>
<name>Y8439_DICDI</name>
<proteinExistence type="predicted"/>
<sequence length="81" mass="7806">MSIFNSIVSLGSVSSSNKVSVANGSSSSSFGSNGISGAKTSAKVNATANVNAIADVNALLATATNAANTNVNVASATSLKL</sequence>
<gene>
    <name type="ORF">DDB_G0283135</name>
</gene>
<reference key="1">
    <citation type="journal article" date="2005" name="Nature">
        <title>The genome of the social amoeba Dictyostelium discoideum.</title>
        <authorList>
            <person name="Eichinger L."/>
            <person name="Pachebat J.A."/>
            <person name="Gloeckner G."/>
            <person name="Rajandream M.A."/>
            <person name="Sucgang R."/>
            <person name="Berriman M."/>
            <person name="Song J."/>
            <person name="Olsen R."/>
            <person name="Szafranski K."/>
            <person name="Xu Q."/>
            <person name="Tunggal B."/>
            <person name="Kummerfeld S."/>
            <person name="Madera M."/>
            <person name="Konfortov B.A."/>
            <person name="Rivero F."/>
            <person name="Bankier A.T."/>
            <person name="Lehmann R."/>
            <person name="Hamlin N."/>
            <person name="Davies R."/>
            <person name="Gaudet P."/>
            <person name="Fey P."/>
            <person name="Pilcher K."/>
            <person name="Chen G."/>
            <person name="Saunders D."/>
            <person name="Sodergren E.J."/>
            <person name="Davis P."/>
            <person name="Kerhornou A."/>
            <person name="Nie X."/>
            <person name="Hall N."/>
            <person name="Anjard C."/>
            <person name="Hemphill L."/>
            <person name="Bason N."/>
            <person name="Farbrother P."/>
            <person name="Desany B."/>
            <person name="Just E."/>
            <person name="Morio T."/>
            <person name="Rost R."/>
            <person name="Churcher C.M."/>
            <person name="Cooper J."/>
            <person name="Haydock S."/>
            <person name="van Driessche N."/>
            <person name="Cronin A."/>
            <person name="Goodhead I."/>
            <person name="Muzny D.M."/>
            <person name="Mourier T."/>
            <person name="Pain A."/>
            <person name="Lu M."/>
            <person name="Harper D."/>
            <person name="Lindsay R."/>
            <person name="Hauser H."/>
            <person name="James K.D."/>
            <person name="Quiles M."/>
            <person name="Madan Babu M."/>
            <person name="Saito T."/>
            <person name="Buchrieser C."/>
            <person name="Wardroper A."/>
            <person name="Felder M."/>
            <person name="Thangavelu M."/>
            <person name="Johnson D."/>
            <person name="Knights A."/>
            <person name="Loulseged H."/>
            <person name="Mungall K.L."/>
            <person name="Oliver K."/>
            <person name="Price C."/>
            <person name="Quail M.A."/>
            <person name="Urushihara H."/>
            <person name="Hernandez J."/>
            <person name="Rabbinowitsch E."/>
            <person name="Steffen D."/>
            <person name="Sanders M."/>
            <person name="Ma J."/>
            <person name="Kohara Y."/>
            <person name="Sharp S."/>
            <person name="Simmonds M.N."/>
            <person name="Spiegler S."/>
            <person name="Tivey A."/>
            <person name="Sugano S."/>
            <person name="White B."/>
            <person name="Walker D."/>
            <person name="Woodward J.R."/>
            <person name="Winckler T."/>
            <person name="Tanaka Y."/>
            <person name="Shaulsky G."/>
            <person name="Schleicher M."/>
            <person name="Weinstock G.M."/>
            <person name="Rosenthal A."/>
            <person name="Cox E.C."/>
            <person name="Chisholm R.L."/>
            <person name="Gibbs R.A."/>
            <person name="Loomis W.F."/>
            <person name="Platzer M."/>
            <person name="Kay R.R."/>
            <person name="Williams J.G."/>
            <person name="Dear P.H."/>
            <person name="Noegel A.A."/>
            <person name="Barrell B.G."/>
            <person name="Kuspa A."/>
        </authorList>
    </citation>
    <scope>NUCLEOTIDE SEQUENCE [LARGE SCALE GENOMIC DNA]</scope>
    <source>
        <strain>AX4</strain>
    </source>
</reference>
<accession>Q54RK6</accession>
<organism>
    <name type="scientific">Dictyostelium discoideum</name>
    <name type="common">Social amoeba</name>
    <dbReference type="NCBI Taxonomy" id="44689"/>
    <lineage>
        <taxon>Eukaryota</taxon>
        <taxon>Amoebozoa</taxon>
        <taxon>Evosea</taxon>
        <taxon>Eumycetozoa</taxon>
        <taxon>Dictyostelia</taxon>
        <taxon>Dictyosteliales</taxon>
        <taxon>Dictyosteliaceae</taxon>
        <taxon>Dictyostelium</taxon>
    </lineage>
</organism>
<keyword id="KW-1185">Reference proteome</keyword>
<dbReference type="EMBL" id="AAFI02000050">
    <property type="protein sequence ID" value="EAL65897.1"/>
    <property type="molecule type" value="Genomic_DNA"/>
</dbReference>
<dbReference type="RefSeq" id="XP_639230.1">
    <property type="nucleotide sequence ID" value="XM_634138.1"/>
</dbReference>
<dbReference type="SMR" id="Q54RK6"/>
<dbReference type="PaxDb" id="44689-DDB0218439"/>
<dbReference type="EnsemblProtists" id="EAL65897">
    <property type="protein sequence ID" value="EAL65897"/>
    <property type="gene ID" value="DDB_G0283135"/>
</dbReference>
<dbReference type="GeneID" id="8623916"/>
<dbReference type="KEGG" id="ddi:DDB_G0283135"/>
<dbReference type="dictyBase" id="DDB_G0283135"/>
<dbReference type="HOGENOM" id="CLU_2578871_0_0_1"/>
<dbReference type="InParanoid" id="Q54RK6"/>
<dbReference type="PRO" id="PR:Q54RK6"/>
<dbReference type="Proteomes" id="UP000002195">
    <property type="component" value="Chromosome 4"/>
</dbReference>
<dbReference type="InterPro" id="IPR008455">
    <property type="entry name" value="HssA/B-related"/>
</dbReference>
<dbReference type="Pfam" id="PF05710">
    <property type="entry name" value="Coiled"/>
    <property type="match status" value="1"/>
</dbReference>
<feature type="chain" id="PRO_0000351266" description="Putative uncharacterized protein DDB_G0283135">
    <location>
        <begin position="1"/>
        <end position="81"/>
    </location>
</feature>
<feature type="region of interest" description="Disordered" evidence="1">
    <location>
        <begin position="11"/>
        <end position="34"/>
    </location>
</feature>
<evidence type="ECO:0000256" key="1">
    <source>
        <dbReference type="SAM" id="MobiDB-lite"/>
    </source>
</evidence>